<organism>
    <name type="scientific">Methanocorpusculum labreanum (strain ATCC 43576 / DSM 4855 / Z)</name>
    <dbReference type="NCBI Taxonomy" id="410358"/>
    <lineage>
        <taxon>Archaea</taxon>
        <taxon>Methanobacteriati</taxon>
        <taxon>Methanobacteriota</taxon>
        <taxon>Stenosarchaea group</taxon>
        <taxon>Methanomicrobia</taxon>
        <taxon>Methanomicrobiales</taxon>
        <taxon>Methanocorpusculaceae</taxon>
        <taxon>Methanocorpusculum</taxon>
    </lineage>
</organism>
<comment type="function">
    <text evidence="1">Part of the RFC clamp loader complex which loads the PCNA sliding clamp onto DNA.</text>
</comment>
<comment type="subunit">
    <text evidence="1">Heteromultimer composed of small subunits (RfcS) and large subunits (RfcL).</text>
</comment>
<comment type="similarity">
    <text evidence="1">Belongs to the activator 1 small subunits family. RfcL subfamily.</text>
</comment>
<reference key="1">
    <citation type="journal article" date="2009" name="Stand. Genomic Sci.">
        <title>Complete genome sequence of Methanocorpusculum labreanum type strain Z.</title>
        <authorList>
            <person name="Anderson I.J."/>
            <person name="Sieprawska-Lupa M."/>
            <person name="Goltsman E."/>
            <person name="Lapidus A."/>
            <person name="Copeland A."/>
            <person name="Glavina Del Rio T."/>
            <person name="Tice H."/>
            <person name="Dalin E."/>
            <person name="Barry K."/>
            <person name="Pitluck S."/>
            <person name="Hauser L."/>
            <person name="Land M."/>
            <person name="Lucas S."/>
            <person name="Richardson P."/>
            <person name="Whitman W.B."/>
            <person name="Kyrpides N.C."/>
        </authorList>
    </citation>
    <scope>NUCLEOTIDE SEQUENCE [LARGE SCALE GENOMIC DNA]</scope>
    <source>
        <strain>ATCC 43576 / DSM 4855 / Z</strain>
    </source>
</reference>
<keyword id="KW-0067">ATP-binding</keyword>
<keyword id="KW-0235">DNA replication</keyword>
<keyword id="KW-0547">Nucleotide-binding</keyword>
<keyword id="KW-1185">Reference proteome</keyword>
<evidence type="ECO:0000255" key="1">
    <source>
        <dbReference type="HAMAP-Rule" id="MF_01508"/>
    </source>
</evidence>
<evidence type="ECO:0000256" key="2">
    <source>
        <dbReference type="SAM" id="MobiDB-lite"/>
    </source>
</evidence>
<accession>A2SQR6</accession>
<protein>
    <recommendedName>
        <fullName evidence="1">Replication factor C large subunit</fullName>
        <shortName evidence="1">RFC large subunit</shortName>
    </recommendedName>
    <alternativeName>
        <fullName evidence="1">Clamp loader large subunit</fullName>
    </alternativeName>
</protein>
<dbReference type="EMBL" id="CP000559">
    <property type="protein sequence ID" value="ABN06672.1"/>
    <property type="molecule type" value="Genomic_DNA"/>
</dbReference>
<dbReference type="RefSeq" id="WP_011832873.1">
    <property type="nucleotide sequence ID" value="NC_008942.1"/>
</dbReference>
<dbReference type="SMR" id="A2SQR6"/>
<dbReference type="STRING" id="410358.Mlab_0498"/>
<dbReference type="GeneID" id="4795947"/>
<dbReference type="KEGG" id="mla:Mlab_0498"/>
<dbReference type="eggNOG" id="arCOG00470">
    <property type="taxonomic scope" value="Archaea"/>
</dbReference>
<dbReference type="HOGENOM" id="CLU_027255_1_0_2"/>
<dbReference type="OrthoDB" id="8658at2157"/>
<dbReference type="Proteomes" id="UP000000365">
    <property type="component" value="Chromosome"/>
</dbReference>
<dbReference type="GO" id="GO:0005524">
    <property type="term" value="F:ATP binding"/>
    <property type="evidence" value="ECO:0007669"/>
    <property type="project" value="UniProtKB-UniRule"/>
</dbReference>
<dbReference type="GO" id="GO:0016887">
    <property type="term" value="F:ATP hydrolysis activity"/>
    <property type="evidence" value="ECO:0007669"/>
    <property type="project" value="InterPro"/>
</dbReference>
<dbReference type="GO" id="GO:0003689">
    <property type="term" value="F:DNA clamp loader activity"/>
    <property type="evidence" value="ECO:0007669"/>
    <property type="project" value="UniProtKB-UniRule"/>
</dbReference>
<dbReference type="GO" id="GO:0006260">
    <property type="term" value="P:DNA replication"/>
    <property type="evidence" value="ECO:0007669"/>
    <property type="project" value="UniProtKB-UniRule"/>
</dbReference>
<dbReference type="CDD" id="cd00009">
    <property type="entry name" value="AAA"/>
    <property type="match status" value="1"/>
</dbReference>
<dbReference type="CDD" id="cd18140">
    <property type="entry name" value="HLD_clamp_RFC"/>
    <property type="match status" value="1"/>
</dbReference>
<dbReference type="Gene3D" id="1.10.8.60">
    <property type="match status" value="1"/>
</dbReference>
<dbReference type="Gene3D" id="3.40.50.300">
    <property type="entry name" value="P-loop containing nucleotide triphosphate hydrolases"/>
    <property type="match status" value="1"/>
</dbReference>
<dbReference type="HAMAP" id="MF_01508">
    <property type="entry name" value="RfcL"/>
    <property type="match status" value="1"/>
</dbReference>
<dbReference type="InterPro" id="IPR003593">
    <property type="entry name" value="AAA+_ATPase"/>
</dbReference>
<dbReference type="InterPro" id="IPR003959">
    <property type="entry name" value="ATPase_AAA_core"/>
</dbReference>
<dbReference type="InterPro" id="IPR027417">
    <property type="entry name" value="P-loop_NTPase"/>
</dbReference>
<dbReference type="InterPro" id="IPR023935">
    <property type="entry name" value="Rep_factor-C_lsu"/>
</dbReference>
<dbReference type="InterPro" id="IPR047854">
    <property type="entry name" value="RFC_lid"/>
</dbReference>
<dbReference type="NCBIfam" id="NF003229">
    <property type="entry name" value="PRK04195.1-5"/>
    <property type="match status" value="1"/>
</dbReference>
<dbReference type="NCBIfam" id="NF003232">
    <property type="entry name" value="PRK04195.2-2"/>
    <property type="match status" value="1"/>
</dbReference>
<dbReference type="PANTHER" id="PTHR23389">
    <property type="entry name" value="CHROMOSOME TRANSMISSION FIDELITY FACTOR 18"/>
    <property type="match status" value="1"/>
</dbReference>
<dbReference type="PANTHER" id="PTHR23389:SF6">
    <property type="entry name" value="REPLICATION FACTOR C SUBUNIT 1"/>
    <property type="match status" value="1"/>
</dbReference>
<dbReference type="Pfam" id="PF00004">
    <property type="entry name" value="AAA"/>
    <property type="match status" value="1"/>
</dbReference>
<dbReference type="SMART" id="SM00382">
    <property type="entry name" value="AAA"/>
    <property type="match status" value="1"/>
</dbReference>
<dbReference type="SUPFAM" id="SSF52540">
    <property type="entry name" value="P-loop containing nucleoside triphosphate hydrolases"/>
    <property type="match status" value="1"/>
</dbReference>
<gene>
    <name evidence="1" type="primary">rfcL</name>
    <name type="ordered locus">Mlab_0498</name>
</gene>
<name>RFCL_METLZ</name>
<sequence length="476" mass="52843">MDWAEKYRPMHLADILGNGSAVRQIVDWAKTWTPDSRPLLFTGKPGIGKTSAALALARDMDWEVLELNASDARTKTIIERVAGNSSTTTSLFGAGRKLIIIDEVDNLEGNADRGGARAIADILKEAKQPIVLIANDAYGVSDSIRRLCDPVPFRAIGVSTLQKRMKEICRFEDIACGEDALSAIAESSAGDMRTAVNMLFGSSTGKTSISVGDINTAQKDERATIFDLVGGVFAGAPDRELQKLSFECDEKPDSVMQWIEESIPLMHDPKRRIRAYGRISRADVYLGRTMRRQYFTLWRYATSMMTLGVASENAGAGFRTRIMPPSRWKRMSTAKKQKTVRRTLAASLAEGYSIPERQIQSEYLDLLSRFAEKDPAAFCERHNLDVDQMGIILHDKAAAAAAVKTVQQAAKERDMKVKKMAASKKAEMRKLEEQLEALRMQEPPVPETPPAAEEQPLEEPQEEKKLAPKQATLDFF</sequence>
<proteinExistence type="inferred from homology"/>
<feature type="chain" id="PRO_0000292182" description="Replication factor C large subunit">
    <location>
        <begin position="1"/>
        <end position="476"/>
    </location>
</feature>
<feature type="region of interest" description="Disordered" evidence="2">
    <location>
        <begin position="435"/>
        <end position="476"/>
    </location>
</feature>
<feature type="binding site" evidence="1">
    <location>
        <begin position="43"/>
        <end position="50"/>
    </location>
    <ligand>
        <name>ATP</name>
        <dbReference type="ChEBI" id="CHEBI:30616"/>
    </ligand>
</feature>